<evidence type="ECO:0000250" key="1">
    <source>
        <dbReference type="UniProtKB" id="P24146"/>
    </source>
</evidence>
<evidence type="ECO:0000269" key="2">
    <source ref="1"/>
</evidence>
<evidence type="ECO:0000303" key="3">
    <source ref="1"/>
</evidence>
<evidence type="ECO:0000305" key="4"/>
<evidence type="ECO:0000305" key="5">
    <source ref="1"/>
</evidence>
<evidence type="ECO:0007829" key="6">
    <source>
        <dbReference type="PDB" id="5T5L"/>
    </source>
</evidence>
<keyword id="KW-0002">3D-structure</keyword>
<keyword id="KW-0106">Calcium</keyword>
<keyword id="KW-0903">Direct protein sequencing</keyword>
<keyword id="KW-0325">Glycoprotein</keyword>
<keyword id="KW-0348">Hemagglutinin</keyword>
<keyword id="KW-0430">Lectin</keyword>
<keyword id="KW-0464">Manganese</keyword>
<keyword id="KW-0479">Metal-binding</keyword>
<keyword id="KW-0964">Secreted</keyword>
<protein>
    <recommendedName>
        <fullName evidence="3">Lectin</fullName>
        <shortName evidence="3">BfL</shortName>
    </recommendedName>
</protein>
<proteinExistence type="evidence at protein level"/>
<name>LECT_BAUFO</name>
<dbReference type="PDB" id="5T50">
    <property type="method" value="X-ray"/>
    <property type="resolution" value="1.43 A"/>
    <property type="chains" value="A/B=1-233"/>
</dbReference>
<dbReference type="PDB" id="5T52">
    <property type="method" value="X-ray"/>
    <property type="resolution" value="1.70 A"/>
    <property type="chains" value="A/B=1-233"/>
</dbReference>
<dbReference type="PDB" id="5T54">
    <property type="method" value="X-ray"/>
    <property type="resolution" value="1.65 A"/>
    <property type="chains" value="A/B=1-233"/>
</dbReference>
<dbReference type="PDB" id="5T55">
    <property type="method" value="X-ray"/>
    <property type="resolution" value="1.43 A"/>
    <property type="chains" value="A/B=1-233"/>
</dbReference>
<dbReference type="PDB" id="5T5J">
    <property type="method" value="X-ray"/>
    <property type="resolution" value="1.35 A"/>
    <property type="chains" value="A/B=1-233"/>
</dbReference>
<dbReference type="PDB" id="5T5L">
    <property type="method" value="X-ray"/>
    <property type="resolution" value="1.17 A"/>
    <property type="chains" value="A/B=1-233"/>
</dbReference>
<dbReference type="PDB" id="5T5O">
    <property type="method" value="X-ray"/>
    <property type="resolution" value="2.75 A"/>
    <property type="chains" value="A/B/C/D/E/F/G/H/I/J=1-233"/>
</dbReference>
<dbReference type="PDB" id="5T5P">
    <property type="method" value="X-ray"/>
    <property type="resolution" value="1.66 A"/>
    <property type="chains" value="A/B=1-233"/>
</dbReference>
<dbReference type="PDBsum" id="5T50"/>
<dbReference type="PDBsum" id="5T52"/>
<dbReference type="PDBsum" id="5T54"/>
<dbReference type="PDBsum" id="5T55"/>
<dbReference type="PDBsum" id="5T5J"/>
<dbReference type="PDBsum" id="5T5L"/>
<dbReference type="PDBsum" id="5T5O"/>
<dbReference type="PDBsum" id="5T5P"/>
<dbReference type="SMR" id="P86993"/>
<dbReference type="UniLectin" id="P86993"/>
<dbReference type="GO" id="GO:0005576">
    <property type="term" value="C:extracellular region"/>
    <property type="evidence" value="ECO:0007669"/>
    <property type="project" value="UniProtKB-SubCell"/>
</dbReference>
<dbReference type="GO" id="GO:0030246">
    <property type="term" value="F:carbohydrate binding"/>
    <property type="evidence" value="ECO:0007669"/>
    <property type="project" value="UniProtKB-KW"/>
</dbReference>
<dbReference type="GO" id="GO:0046872">
    <property type="term" value="F:metal ion binding"/>
    <property type="evidence" value="ECO:0007669"/>
    <property type="project" value="UniProtKB-KW"/>
</dbReference>
<dbReference type="CDD" id="cd06899">
    <property type="entry name" value="lectin_legume_LecRK_Arcelin_ConA"/>
    <property type="match status" value="1"/>
</dbReference>
<dbReference type="Gene3D" id="2.60.120.200">
    <property type="match status" value="1"/>
</dbReference>
<dbReference type="InterPro" id="IPR013320">
    <property type="entry name" value="ConA-like_dom_sf"/>
</dbReference>
<dbReference type="InterPro" id="IPR016363">
    <property type="entry name" value="L-lectin"/>
</dbReference>
<dbReference type="InterPro" id="IPR019825">
    <property type="entry name" value="Lectin_legB_Mn/Ca_BS"/>
</dbReference>
<dbReference type="InterPro" id="IPR001220">
    <property type="entry name" value="Legume_lectin_dom"/>
</dbReference>
<dbReference type="InterPro" id="IPR050258">
    <property type="entry name" value="Leguminous_Lectin"/>
</dbReference>
<dbReference type="PANTHER" id="PTHR32401">
    <property type="entry name" value="CONCANAVALIN A-LIKE LECTIN FAMILY PROTEIN"/>
    <property type="match status" value="1"/>
</dbReference>
<dbReference type="PANTHER" id="PTHR32401:SF47">
    <property type="entry name" value="LEGUME LECTIN DOMAIN-CONTAINING PROTEIN"/>
    <property type="match status" value="1"/>
</dbReference>
<dbReference type="Pfam" id="PF00139">
    <property type="entry name" value="Lectin_legB"/>
    <property type="match status" value="1"/>
</dbReference>
<dbReference type="PIRSF" id="PIRSF002690">
    <property type="entry name" value="L-type_lectin_plant"/>
    <property type="match status" value="1"/>
</dbReference>
<dbReference type="SUPFAM" id="SSF49899">
    <property type="entry name" value="Concanavalin A-like lectins/glucanases"/>
    <property type="match status" value="1"/>
</dbReference>
<dbReference type="PROSITE" id="PS00307">
    <property type="entry name" value="LECTIN_LEGUME_BETA"/>
    <property type="match status" value="1"/>
</dbReference>
<sequence>SELSFNYPNFQSVEDITFQGGASPRNETLQLTPTDSNGIPIRQRAGHAVYSQPFQLRDTSFYTTFTFVIRTTSNSPADGFAIFIAPPDFPVKRYGGYLGLFEPNTATNTSANKVVAVEFDTWVNTEWKEPRYRHIGIDVNSIVSVRVTRWQDKDVFSRSIATAHVGYDGISKILTAFVTYPDGGNYVLSHVVDLAEIFPGDVRIGFSGATGQYETQYIHSWSFSSTSTNLLRD</sequence>
<reference evidence="4" key="1">
    <citation type="journal article" date="2012" name="Process Biochem.">
        <title>Purification, primary structure and potential functions of a novel lectin from Bauhinia forficata seeds.</title>
        <authorList>
            <person name="Silva M.C.C."/>
            <person name="Santana L.A."/>
            <person name="Mentelee R."/>
            <person name="Ferreira R.S."/>
            <person name="Miranda A."/>
            <person name="Silva-Lucca R.A."/>
            <person name="Sampaio M.U."/>
            <person name="Correia M.T.S."/>
            <person name="Oliva M.L.V."/>
        </authorList>
    </citation>
    <scope>PROTEIN SEQUENCE</scope>
    <scope>FUNCTION</scope>
    <scope>BIOPHYSICOCHEMICAL PROPERTIES</scope>
    <scope>SUBUNIT</scope>
    <scope>GLYCOSYLATION AT ASN-26 AND ASN-108</scope>
    <scope>MASS SPECTROMETRY</scope>
    <source>
        <tissue evidence="3">Seed</tissue>
    </source>
</reference>
<feature type="chain" id="PRO_0000435798" description="Lectin">
    <location>
        <begin position="1"/>
        <end position="233"/>
    </location>
</feature>
<feature type="binding site" evidence="1">
    <location>
        <position position="118"/>
    </location>
    <ligand>
        <name>Mn(2+)</name>
        <dbReference type="ChEBI" id="CHEBI:29035"/>
    </ligand>
</feature>
<feature type="binding site" evidence="1">
    <location>
        <position position="120"/>
    </location>
    <ligand>
        <name>Ca(2+)</name>
        <dbReference type="ChEBI" id="CHEBI:29108"/>
    </ligand>
</feature>
<feature type="binding site" evidence="1">
    <location>
        <position position="120"/>
    </location>
    <ligand>
        <name>Mn(2+)</name>
        <dbReference type="ChEBI" id="CHEBI:29035"/>
    </ligand>
</feature>
<feature type="binding site" evidence="1">
    <location>
        <position position="122"/>
    </location>
    <ligand>
        <name>Ca(2+)</name>
        <dbReference type="ChEBI" id="CHEBI:29108"/>
    </ligand>
</feature>
<feature type="binding site" evidence="1">
    <location>
        <position position="124"/>
    </location>
    <ligand>
        <name>Ca(2+)</name>
        <dbReference type="ChEBI" id="CHEBI:29108"/>
    </ligand>
</feature>
<feature type="binding site" evidence="1">
    <location>
        <position position="129"/>
    </location>
    <ligand>
        <name>Ca(2+)</name>
        <dbReference type="ChEBI" id="CHEBI:29108"/>
    </ligand>
</feature>
<feature type="binding site" evidence="1">
    <location>
        <position position="129"/>
    </location>
    <ligand>
        <name>Mn(2+)</name>
        <dbReference type="ChEBI" id="CHEBI:29035"/>
    </ligand>
</feature>
<feature type="binding site" evidence="1">
    <location>
        <position position="134"/>
    </location>
    <ligand>
        <name>Mn(2+)</name>
        <dbReference type="ChEBI" id="CHEBI:29035"/>
    </ligand>
</feature>
<feature type="glycosylation site" description="N-linked (GlcNAc...) asparagine" evidence="2">
    <location>
        <position position="26"/>
    </location>
</feature>
<feature type="glycosylation site" description="N-linked (GlcNAc...) asparagine" evidence="2">
    <location>
        <position position="108"/>
    </location>
</feature>
<feature type="strand" evidence="6">
    <location>
        <begin position="3"/>
        <end position="11"/>
    </location>
</feature>
<feature type="strand" evidence="6">
    <location>
        <begin position="16"/>
        <end position="20"/>
    </location>
</feature>
<feature type="strand" evidence="6">
    <location>
        <begin position="23"/>
        <end position="25"/>
    </location>
</feature>
<feature type="strand" evidence="6">
    <location>
        <begin position="28"/>
        <end position="30"/>
    </location>
</feature>
<feature type="strand" evidence="6">
    <location>
        <begin position="45"/>
        <end position="52"/>
    </location>
</feature>
<feature type="strand" evidence="6">
    <location>
        <begin position="59"/>
        <end position="75"/>
    </location>
</feature>
<feature type="strand" evidence="6">
    <location>
        <begin position="77"/>
        <end position="85"/>
    </location>
</feature>
<feature type="helix" evidence="6">
    <location>
        <begin position="95"/>
        <end position="97"/>
    </location>
</feature>
<feature type="turn" evidence="6">
    <location>
        <begin position="98"/>
        <end position="100"/>
    </location>
</feature>
<feature type="turn" evidence="6">
    <location>
        <begin position="103"/>
        <end position="107"/>
    </location>
</feature>
<feature type="helix" evidence="6">
    <location>
        <begin position="109"/>
        <end position="111"/>
    </location>
</feature>
<feature type="strand" evidence="6">
    <location>
        <begin position="115"/>
        <end position="120"/>
    </location>
</feature>
<feature type="strand" evidence="6">
    <location>
        <begin position="125"/>
        <end position="127"/>
    </location>
</feature>
<feature type="strand" evidence="6">
    <location>
        <begin position="134"/>
        <end position="143"/>
    </location>
</feature>
<feature type="strand" evidence="6">
    <location>
        <begin position="145"/>
        <end position="149"/>
    </location>
</feature>
<feature type="helix" evidence="6">
    <location>
        <begin position="152"/>
        <end position="155"/>
    </location>
</feature>
<feature type="strand" evidence="6">
    <location>
        <begin position="161"/>
        <end position="168"/>
    </location>
</feature>
<feature type="turn" evidence="6">
    <location>
        <begin position="169"/>
        <end position="172"/>
    </location>
</feature>
<feature type="strand" evidence="6">
    <location>
        <begin position="173"/>
        <end position="179"/>
    </location>
</feature>
<feature type="strand" evidence="6">
    <location>
        <begin position="185"/>
        <end position="191"/>
    </location>
</feature>
<feature type="helix" evidence="6">
    <location>
        <begin position="194"/>
        <end position="197"/>
    </location>
</feature>
<feature type="strand" evidence="6">
    <location>
        <begin position="199"/>
        <end position="227"/>
    </location>
</feature>
<organism evidence="3">
    <name type="scientific">Bauhinia forficata</name>
    <name type="common">Brazilian orchid-tree</name>
    <name type="synonym">Cow's-foot</name>
    <dbReference type="NCBI Taxonomy" id="413686"/>
    <lineage>
        <taxon>Eukaryota</taxon>
        <taxon>Viridiplantae</taxon>
        <taxon>Streptophyta</taxon>
        <taxon>Embryophyta</taxon>
        <taxon>Tracheophyta</taxon>
        <taxon>Spermatophyta</taxon>
        <taxon>Magnoliopsida</taxon>
        <taxon>eudicotyledons</taxon>
        <taxon>Gunneridae</taxon>
        <taxon>Pentapetalae</taxon>
        <taxon>rosids</taxon>
        <taxon>fabids</taxon>
        <taxon>Fabales</taxon>
        <taxon>Fabaceae</taxon>
        <taxon>Cercidoideae</taxon>
        <taxon>Cercideae</taxon>
        <taxon>Bauhiniinae</taxon>
        <taxon>Bauhinia</taxon>
    </lineage>
</organism>
<accession>P86993</accession>
<comment type="function">
    <text evidence="2">Has metal-independent hemagglutinating activity towards erythrocytes from rabbit and human. Hemagglutinating activity is inhibited by glycoproteins fetuin, asialo-fetuin, thyroglobulin and azocasein but not by free carbohydrates. Inhibits ADP- and epinephrin-induced but not collagen-, fibrinogen, thrombin- or arachidonic acid-induced platelet aggregation in vitro. Has anticoagulant activity in vitro.</text>
</comment>
<comment type="biophysicochemical properties">
    <phDependence>
        <text evidence="2">Optimum pH is 6 for hemagglutinating activity.</text>
    </phDependence>
    <temperatureDependence>
        <text evidence="2">Heat stable. Retains hemagglutinating activity after incubation at 100 degrees Celsius for 30 minutes.</text>
    </temperatureDependence>
</comment>
<comment type="subunit">
    <text evidence="2">Monomer.</text>
</comment>
<comment type="subcellular location">
    <subcellularLocation>
        <location evidence="5">Secreted</location>
    </subcellularLocation>
</comment>
<comment type="mass spectrometry"/>
<comment type="miscellaneous">
    <text evidence="2">Hemagglutinating activity is independent of divalent metal ions.</text>
</comment>
<comment type="similarity">
    <text evidence="4">Belongs to the leguminous lectin family.</text>
</comment>